<protein>
    <recommendedName>
        <fullName evidence="6">Sodium/calcium exchanger NCL1</fullName>
    </recommendedName>
    <alternativeName>
        <fullName evidence="6">Na(+)/Ca(2+)-exchange protein NCL1</fullName>
    </alternativeName>
    <alternativeName>
        <fullName evidence="5">OsEFCAX1</fullName>
    </alternativeName>
    <alternativeName>
        <fullName evidence="6">Protein NCX-like 1</fullName>
        <shortName evidence="6">OsNCL1</shortName>
    </alternativeName>
</protein>
<organism>
    <name type="scientific">Oryza sativa subsp. japonica</name>
    <name type="common">Rice</name>
    <dbReference type="NCBI Taxonomy" id="39947"/>
    <lineage>
        <taxon>Eukaryota</taxon>
        <taxon>Viridiplantae</taxon>
        <taxon>Streptophyta</taxon>
        <taxon>Embryophyta</taxon>
        <taxon>Tracheophyta</taxon>
        <taxon>Spermatophyta</taxon>
        <taxon>Magnoliopsida</taxon>
        <taxon>Liliopsida</taxon>
        <taxon>Poales</taxon>
        <taxon>Poaceae</taxon>
        <taxon>BOP clade</taxon>
        <taxon>Oryzoideae</taxon>
        <taxon>Oryzeae</taxon>
        <taxon>Oryzinae</taxon>
        <taxon>Oryza</taxon>
        <taxon>Oryza sativa</taxon>
    </lineage>
</organism>
<feature type="chain" id="PRO_0000439589" description="Sodium/calcium exchanger NCL1">
    <location>
        <begin position="1"/>
        <end position="584"/>
    </location>
</feature>
<feature type="transmembrane region" description="Helical" evidence="2">
    <location>
        <begin position="77"/>
        <end position="97"/>
    </location>
</feature>
<feature type="transmembrane region" description="Helical" evidence="2">
    <location>
        <begin position="120"/>
        <end position="140"/>
    </location>
</feature>
<feature type="transmembrane region" description="Helical" evidence="2">
    <location>
        <begin position="154"/>
        <end position="174"/>
    </location>
</feature>
<feature type="transmembrane region" description="Helical" evidence="2">
    <location>
        <begin position="215"/>
        <end position="235"/>
    </location>
</feature>
<feature type="transmembrane region" description="Helical" evidence="2">
    <location>
        <begin position="245"/>
        <end position="265"/>
    </location>
</feature>
<feature type="transmembrane region" description="Helical" evidence="2">
    <location>
        <begin position="426"/>
        <end position="446"/>
    </location>
</feature>
<feature type="transmembrane region" description="Helical" evidence="2">
    <location>
        <begin position="466"/>
        <end position="486"/>
    </location>
</feature>
<feature type="transmembrane region" description="Helical" evidence="2">
    <location>
        <begin position="504"/>
        <end position="524"/>
    </location>
</feature>
<feature type="transmembrane region" description="Helical" evidence="2">
    <location>
        <begin position="531"/>
        <end position="551"/>
    </location>
</feature>
<feature type="transmembrane region" description="Helical" evidence="2">
    <location>
        <begin position="561"/>
        <end position="581"/>
    </location>
</feature>
<feature type="domain" description="EF-hand 1" evidence="3">
    <location>
        <begin position="305"/>
        <end position="340"/>
    </location>
</feature>
<feature type="domain" description="EF-hand 2" evidence="3">
    <location>
        <begin position="345"/>
        <end position="380"/>
    </location>
</feature>
<feature type="binding site" evidence="3">
    <location>
        <position position="318"/>
    </location>
    <ligand>
        <name>Ca(2+)</name>
        <dbReference type="ChEBI" id="CHEBI:29108"/>
        <label>1</label>
    </ligand>
</feature>
<feature type="binding site" evidence="3">
    <location>
        <position position="320"/>
    </location>
    <ligand>
        <name>Ca(2+)</name>
        <dbReference type="ChEBI" id="CHEBI:29108"/>
        <label>1</label>
    </ligand>
</feature>
<feature type="binding site" evidence="3">
    <location>
        <position position="322"/>
    </location>
    <ligand>
        <name>Ca(2+)</name>
        <dbReference type="ChEBI" id="CHEBI:29108"/>
        <label>1</label>
    </ligand>
</feature>
<feature type="binding site" evidence="3">
    <location>
        <position position="324"/>
    </location>
    <ligand>
        <name>Ca(2+)</name>
        <dbReference type="ChEBI" id="CHEBI:29108"/>
        <label>1</label>
    </ligand>
</feature>
<feature type="binding site" evidence="3">
    <location>
        <position position="329"/>
    </location>
    <ligand>
        <name>Ca(2+)</name>
        <dbReference type="ChEBI" id="CHEBI:29108"/>
        <label>1</label>
    </ligand>
</feature>
<feature type="binding site" evidence="3">
    <location>
        <position position="358"/>
    </location>
    <ligand>
        <name>Ca(2+)</name>
        <dbReference type="ChEBI" id="CHEBI:29108"/>
        <label>2</label>
    </ligand>
</feature>
<feature type="binding site" evidence="3">
    <location>
        <position position="360"/>
    </location>
    <ligand>
        <name>Ca(2+)</name>
        <dbReference type="ChEBI" id="CHEBI:29108"/>
        <label>2</label>
    </ligand>
</feature>
<feature type="binding site" evidence="3">
    <location>
        <position position="362"/>
    </location>
    <ligand>
        <name>Ca(2+)</name>
        <dbReference type="ChEBI" id="CHEBI:29108"/>
        <label>2</label>
    </ligand>
</feature>
<feature type="binding site" evidence="3">
    <location>
        <position position="369"/>
    </location>
    <ligand>
        <name>Ca(2+)</name>
        <dbReference type="ChEBI" id="CHEBI:29108"/>
        <label>2</label>
    </ligand>
</feature>
<dbReference type="EMBL" id="AP002092">
    <property type="protein sequence ID" value="BAD73036.1"/>
    <property type="molecule type" value="Genomic_DNA"/>
</dbReference>
<dbReference type="EMBL" id="AP008207">
    <property type="protein sequence ID" value="BAF04292.1"/>
    <property type="molecule type" value="Genomic_DNA"/>
</dbReference>
<dbReference type="EMBL" id="AP014957">
    <property type="protein sequence ID" value="BAS70998.1"/>
    <property type="molecule type" value="Genomic_DNA"/>
</dbReference>
<dbReference type="EMBL" id="CM000138">
    <property type="protein sequence ID" value="EEE54102.1"/>
    <property type="molecule type" value="Genomic_DNA"/>
</dbReference>
<dbReference type="EMBL" id="AK066468">
    <property type="protein sequence ID" value="BAG89983.1"/>
    <property type="molecule type" value="mRNA"/>
</dbReference>
<dbReference type="RefSeq" id="NP_001388388.1">
    <property type="nucleotide sequence ID" value="NM_001401459.1"/>
</dbReference>
<dbReference type="RefSeq" id="XP_015621883.1">
    <property type="nucleotide sequence ID" value="XM_015766397.1"/>
</dbReference>
<dbReference type="FunCoup" id="Q5QNI2">
    <property type="interactions" value="895"/>
</dbReference>
<dbReference type="STRING" id="39947.Q5QNI2"/>
<dbReference type="PaxDb" id="39947-Q5QNI2"/>
<dbReference type="EnsemblPlants" id="Os01t0212400-01">
    <property type="protein sequence ID" value="Os01t0212400-01"/>
    <property type="gene ID" value="Os01g0212400"/>
</dbReference>
<dbReference type="GeneID" id="4325568"/>
<dbReference type="Gramene" id="Os01t0212400-01">
    <property type="protein sequence ID" value="Os01t0212400-01"/>
    <property type="gene ID" value="Os01g0212400"/>
</dbReference>
<dbReference type="KEGG" id="dosa:Os01g0212400"/>
<dbReference type="eggNOG" id="ENOG502QV8Y">
    <property type="taxonomic scope" value="Eukaryota"/>
</dbReference>
<dbReference type="HOGENOM" id="CLU_023891_0_0_1"/>
<dbReference type="InParanoid" id="Q5QNI2"/>
<dbReference type="OMA" id="IFCTATH"/>
<dbReference type="OrthoDB" id="26525at2759"/>
<dbReference type="Proteomes" id="UP000000763">
    <property type="component" value="Chromosome 1"/>
</dbReference>
<dbReference type="Proteomes" id="UP000007752">
    <property type="component" value="Chromosome 1"/>
</dbReference>
<dbReference type="Proteomes" id="UP000059680">
    <property type="component" value="Chromosome 1"/>
</dbReference>
<dbReference type="GO" id="GO:0005886">
    <property type="term" value="C:plasma membrane"/>
    <property type="evidence" value="ECO:0007669"/>
    <property type="project" value="UniProtKB-SubCell"/>
</dbReference>
<dbReference type="GO" id="GO:0005774">
    <property type="term" value="C:vacuolar membrane"/>
    <property type="evidence" value="ECO:0007669"/>
    <property type="project" value="UniProtKB-ARBA"/>
</dbReference>
<dbReference type="GO" id="GO:0005509">
    <property type="term" value="F:calcium ion binding"/>
    <property type="evidence" value="ECO:0007669"/>
    <property type="project" value="InterPro"/>
</dbReference>
<dbReference type="GO" id="GO:0015369">
    <property type="term" value="F:calcium:proton antiporter activity"/>
    <property type="evidence" value="ECO:0000318"/>
    <property type="project" value="GO_Central"/>
</dbReference>
<dbReference type="GO" id="GO:0070588">
    <property type="term" value="P:calcium ion transmembrane transport"/>
    <property type="evidence" value="ECO:0000318"/>
    <property type="project" value="GO_Central"/>
</dbReference>
<dbReference type="GO" id="GO:0006874">
    <property type="term" value="P:intracellular calcium ion homeostasis"/>
    <property type="evidence" value="ECO:0000318"/>
    <property type="project" value="GO_Central"/>
</dbReference>
<dbReference type="GO" id="GO:0006814">
    <property type="term" value="P:sodium ion transport"/>
    <property type="evidence" value="ECO:0007669"/>
    <property type="project" value="UniProtKB-KW"/>
</dbReference>
<dbReference type="CDD" id="cd00051">
    <property type="entry name" value="EFh"/>
    <property type="match status" value="1"/>
</dbReference>
<dbReference type="FunFam" id="1.10.238.10:FF:000361">
    <property type="entry name" value="Sodium/calcium exchanger NCL2"/>
    <property type="match status" value="1"/>
</dbReference>
<dbReference type="FunFam" id="1.20.1420.30:FF:000019">
    <property type="entry name" value="Sodium/calcium exchanger NCL2"/>
    <property type="match status" value="1"/>
</dbReference>
<dbReference type="Gene3D" id="1.10.238.10">
    <property type="entry name" value="EF-hand"/>
    <property type="match status" value="1"/>
</dbReference>
<dbReference type="Gene3D" id="1.20.1420.30">
    <property type="entry name" value="NCX, central ion-binding region"/>
    <property type="match status" value="1"/>
</dbReference>
<dbReference type="InterPro" id="IPR004713">
    <property type="entry name" value="CaH_exchang"/>
</dbReference>
<dbReference type="InterPro" id="IPR011992">
    <property type="entry name" value="EF-hand-dom_pair"/>
</dbReference>
<dbReference type="InterPro" id="IPR018247">
    <property type="entry name" value="EF_Hand_1_Ca_BS"/>
</dbReference>
<dbReference type="InterPro" id="IPR002048">
    <property type="entry name" value="EF_hand_dom"/>
</dbReference>
<dbReference type="InterPro" id="IPR004837">
    <property type="entry name" value="NaCa_Exmemb"/>
</dbReference>
<dbReference type="InterPro" id="IPR044880">
    <property type="entry name" value="NCX_ion-bd_dom_sf"/>
</dbReference>
<dbReference type="PANTHER" id="PTHR31503:SF52">
    <property type="entry name" value="SODIUM_CALCIUM EXCHANGER NCL1"/>
    <property type="match status" value="1"/>
</dbReference>
<dbReference type="PANTHER" id="PTHR31503">
    <property type="entry name" value="VACUOLAR CALCIUM ION TRANSPORTER"/>
    <property type="match status" value="1"/>
</dbReference>
<dbReference type="Pfam" id="PF13499">
    <property type="entry name" value="EF-hand_7"/>
    <property type="match status" value="1"/>
</dbReference>
<dbReference type="Pfam" id="PF01699">
    <property type="entry name" value="Na_Ca_ex"/>
    <property type="match status" value="2"/>
</dbReference>
<dbReference type="SMART" id="SM00054">
    <property type="entry name" value="EFh"/>
    <property type="match status" value="2"/>
</dbReference>
<dbReference type="SUPFAM" id="SSF47473">
    <property type="entry name" value="EF-hand"/>
    <property type="match status" value="1"/>
</dbReference>
<dbReference type="PROSITE" id="PS00018">
    <property type="entry name" value="EF_HAND_1"/>
    <property type="match status" value="2"/>
</dbReference>
<dbReference type="PROSITE" id="PS50222">
    <property type="entry name" value="EF_HAND_2"/>
    <property type="match status" value="2"/>
</dbReference>
<gene>
    <name evidence="6" type="primary">NCL1</name>
    <name evidence="8" type="ordered locus">Os01g0212400</name>
    <name evidence="6" type="ordered locus">LOC_Os01g11414</name>
    <name evidence="9" type="ORF">OsJ_00857</name>
    <name evidence="7" type="ORF">P0031E09.40</name>
</gene>
<proteinExistence type="evidence at transcript level"/>
<accession>Q5QNI2</accession>
<comment type="function">
    <text evidence="1">May function as a sodium/calcium exchanger (NCX) and participate in the maintenance of calcium homeostasis. May play a role abiotic stress responses.</text>
</comment>
<comment type="subcellular location">
    <subcellularLocation>
        <location evidence="6">Cell membrane</location>
        <topology evidence="2">Multi-pass membrane protein</topology>
    </subcellularLocation>
</comment>
<comment type="induction">
    <text evidence="4">Induced by cold, drought and salt stresses.</text>
</comment>
<comment type="similarity">
    <text evidence="6">Belongs to the Ca(2+):cation antiporter (CaCA) (TC 2.A.19) family.</text>
</comment>
<keyword id="KW-0050">Antiport</keyword>
<keyword id="KW-0106">Calcium</keyword>
<keyword id="KW-0109">Calcium transport</keyword>
<keyword id="KW-1003">Cell membrane</keyword>
<keyword id="KW-0406">Ion transport</keyword>
<keyword id="KW-0472">Membrane</keyword>
<keyword id="KW-0479">Metal-binding</keyword>
<keyword id="KW-1185">Reference proteome</keyword>
<keyword id="KW-0677">Repeat</keyword>
<keyword id="KW-0915">Sodium</keyword>
<keyword id="KW-0739">Sodium transport</keyword>
<keyword id="KW-0346">Stress response</keyword>
<keyword id="KW-0812">Transmembrane</keyword>
<keyword id="KW-1133">Transmembrane helix</keyword>
<keyword id="KW-0813">Transport</keyword>
<reference key="1">
    <citation type="journal article" date="2002" name="Nature">
        <title>The genome sequence and structure of rice chromosome 1.</title>
        <authorList>
            <person name="Sasaki T."/>
            <person name="Matsumoto T."/>
            <person name="Yamamoto K."/>
            <person name="Sakata K."/>
            <person name="Baba T."/>
            <person name="Katayose Y."/>
            <person name="Wu J."/>
            <person name="Niimura Y."/>
            <person name="Cheng Z."/>
            <person name="Nagamura Y."/>
            <person name="Antonio B.A."/>
            <person name="Kanamori H."/>
            <person name="Hosokawa S."/>
            <person name="Masukawa M."/>
            <person name="Arikawa K."/>
            <person name="Chiden Y."/>
            <person name="Hayashi M."/>
            <person name="Okamoto M."/>
            <person name="Ando T."/>
            <person name="Aoki H."/>
            <person name="Arita K."/>
            <person name="Hamada M."/>
            <person name="Harada C."/>
            <person name="Hijishita S."/>
            <person name="Honda M."/>
            <person name="Ichikawa Y."/>
            <person name="Idonuma A."/>
            <person name="Iijima M."/>
            <person name="Ikeda M."/>
            <person name="Ikeno M."/>
            <person name="Ito S."/>
            <person name="Ito T."/>
            <person name="Ito Y."/>
            <person name="Ito Y."/>
            <person name="Iwabuchi A."/>
            <person name="Kamiya K."/>
            <person name="Karasawa W."/>
            <person name="Katagiri S."/>
            <person name="Kikuta A."/>
            <person name="Kobayashi N."/>
            <person name="Kono I."/>
            <person name="Machita K."/>
            <person name="Maehara T."/>
            <person name="Mizuno H."/>
            <person name="Mizubayashi T."/>
            <person name="Mukai Y."/>
            <person name="Nagasaki H."/>
            <person name="Nakashima M."/>
            <person name="Nakama Y."/>
            <person name="Nakamichi Y."/>
            <person name="Nakamura M."/>
            <person name="Namiki N."/>
            <person name="Negishi M."/>
            <person name="Ohta I."/>
            <person name="Ono N."/>
            <person name="Saji S."/>
            <person name="Sakai K."/>
            <person name="Shibata M."/>
            <person name="Shimokawa T."/>
            <person name="Shomura A."/>
            <person name="Song J."/>
            <person name="Takazaki Y."/>
            <person name="Terasawa K."/>
            <person name="Tsuji K."/>
            <person name="Waki K."/>
            <person name="Yamagata H."/>
            <person name="Yamane H."/>
            <person name="Yoshiki S."/>
            <person name="Yoshihara R."/>
            <person name="Yukawa K."/>
            <person name="Zhong H."/>
            <person name="Iwama H."/>
            <person name="Endo T."/>
            <person name="Ito H."/>
            <person name="Hahn J.H."/>
            <person name="Kim H.-I."/>
            <person name="Eun M.-Y."/>
            <person name="Yano M."/>
            <person name="Jiang J."/>
            <person name="Gojobori T."/>
        </authorList>
    </citation>
    <scope>NUCLEOTIDE SEQUENCE [LARGE SCALE GENOMIC DNA]</scope>
    <source>
        <strain>cv. Nipponbare</strain>
    </source>
</reference>
<reference key="2">
    <citation type="journal article" date="2005" name="Nature">
        <title>The map-based sequence of the rice genome.</title>
        <authorList>
            <consortium name="International rice genome sequencing project (IRGSP)"/>
        </authorList>
    </citation>
    <scope>NUCLEOTIDE SEQUENCE [LARGE SCALE GENOMIC DNA]</scope>
    <source>
        <strain>cv. Nipponbare</strain>
    </source>
</reference>
<reference key="3">
    <citation type="journal article" date="2008" name="Nucleic Acids Res.">
        <title>The rice annotation project database (RAP-DB): 2008 update.</title>
        <authorList>
            <consortium name="The rice annotation project (RAP)"/>
        </authorList>
    </citation>
    <scope>GENOME REANNOTATION</scope>
    <source>
        <strain>cv. Nipponbare</strain>
    </source>
</reference>
<reference key="4">
    <citation type="journal article" date="2013" name="Rice">
        <title>Improvement of the Oryza sativa Nipponbare reference genome using next generation sequence and optical map data.</title>
        <authorList>
            <person name="Kawahara Y."/>
            <person name="de la Bastide M."/>
            <person name="Hamilton J.P."/>
            <person name="Kanamori H."/>
            <person name="McCombie W.R."/>
            <person name="Ouyang S."/>
            <person name="Schwartz D.C."/>
            <person name="Tanaka T."/>
            <person name="Wu J."/>
            <person name="Zhou S."/>
            <person name="Childs K.L."/>
            <person name="Davidson R.M."/>
            <person name="Lin H."/>
            <person name="Quesada-Ocampo L."/>
            <person name="Vaillancourt B."/>
            <person name="Sakai H."/>
            <person name="Lee S.S."/>
            <person name="Kim J."/>
            <person name="Numa H."/>
            <person name="Itoh T."/>
            <person name="Buell C.R."/>
            <person name="Matsumoto T."/>
        </authorList>
    </citation>
    <scope>GENOME REANNOTATION</scope>
    <source>
        <strain>cv. Nipponbare</strain>
    </source>
</reference>
<reference key="5">
    <citation type="journal article" date="2005" name="PLoS Biol.">
        <title>The genomes of Oryza sativa: a history of duplications.</title>
        <authorList>
            <person name="Yu J."/>
            <person name="Wang J."/>
            <person name="Lin W."/>
            <person name="Li S."/>
            <person name="Li H."/>
            <person name="Zhou J."/>
            <person name="Ni P."/>
            <person name="Dong W."/>
            <person name="Hu S."/>
            <person name="Zeng C."/>
            <person name="Zhang J."/>
            <person name="Zhang Y."/>
            <person name="Li R."/>
            <person name="Xu Z."/>
            <person name="Li S."/>
            <person name="Li X."/>
            <person name="Zheng H."/>
            <person name="Cong L."/>
            <person name="Lin L."/>
            <person name="Yin J."/>
            <person name="Geng J."/>
            <person name="Li G."/>
            <person name="Shi J."/>
            <person name="Liu J."/>
            <person name="Lv H."/>
            <person name="Li J."/>
            <person name="Wang J."/>
            <person name="Deng Y."/>
            <person name="Ran L."/>
            <person name="Shi X."/>
            <person name="Wang X."/>
            <person name="Wu Q."/>
            <person name="Li C."/>
            <person name="Ren X."/>
            <person name="Wang J."/>
            <person name="Wang X."/>
            <person name="Li D."/>
            <person name="Liu D."/>
            <person name="Zhang X."/>
            <person name="Ji Z."/>
            <person name="Zhao W."/>
            <person name="Sun Y."/>
            <person name="Zhang Z."/>
            <person name="Bao J."/>
            <person name="Han Y."/>
            <person name="Dong L."/>
            <person name="Ji J."/>
            <person name="Chen P."/>
            <person name="Wu S."/>
            <person name="Liu J."/>
            <person name="Xiao Y."/>
            <person name="Bu D."/>
            <person name="Tan J."/>
            <person name="Yang L."/>
            <person name="Ye C."/>
            <person name="Zhang J."/>
            <person name="Xu J."/>
            <person name="Zhou Y."/>
            <person name="Yu Y."/>
            <person name="Zhang B."/>
            <person name="Zhuang S."/>
            <person name="Wei H."/>
            <person name="Liu B."/>
            <person name="Lei M."/>
            <person name="Yu H."/>
            <person name="Li Y."/>
            <person name="Xu H."/>
            <person name="Wei S."/>
            <person name="He X."/>
            <person name="Fang L."/>
            <person name="Zhang Z."/>
            <person name="Zhang Y."/>
            <person name="Huang X."/>
            <person name="Su Z."/>
            <person name="Tong W."/>
            <person name="Li J."/>
            <person name="Tong Z."/>
            <person name="Li S."/>
            <person name="Ye J."/>
            <person name="Wang L."/>
            <person name="Fang L."/>
            <person name="Lei T."/>
            <person name="Chen C.-S."/>
            <person name="Chen H.-C."/>
            <person name="Xu Z."/>
            <person name="Li H."/>
            <person name="Huang H."/>
            <person name="Zhang F."/>
            <person name="Xu H."/>
            <person name="Li N."/>
            <person name="Zhao C."/>
            <person name="Li S."/>
            <person name="Dong L."/>
            <person name="Huang Y."/>
            <person name="Li L."/>
            <person name="Xi Y."/>
            <person name="Qi Q."/>
            <person name="Li W."/>
            <person name="Zhang B."/>
            <person name="Hu W."/>
            <person name="Zhang Y."/>
            <person name="Tian X."/>
            <person name="Jiao Y."/>
            <person name="Liang X."/>
            <person name="Jin J."/>
            <person name="Gao L."/>
            <person name="Zheng W."/>
            <person name="Hao B."/>
            <person name="Liu S.-M."/>
            <person name="Wang W."/>
            <person name="Yuan L."/>
            <person name="Cao M."/>
            <person name="McDermott J."/>
            <person name="Samudrala R."/>
            <person name="Wang J."/>
            <person name="Wong G.K.-S."/>
            <person name="Yang H."/>
        </authorList>
    </citation>
    <scope>NUCLEOTIDE SEQUENCE [LARGE SCALE GENOMIC DNA]</scope>
    <source>
        <strain>cv. Nipponbare</strain>
    </source>
</reference>
<reference key="6">
    <citation type="journal article" date="2003" name="Science">
        <title>Collection, mapping, and annotation of over 28,000 cDNA clones from japonica rice.</title>
        <authorList>
            <consortium name="The rice full-length cDNA consortium"/>
        </authorList>
    </citation>
    <scope>NUCLEOTIDE SEQUENCE [LARGE SCALE MRNA]</scope>
    <source>
        <strain>cv. Nipponbare</strain>
    </source>
</reference>
<reference key="7">
    <citation type="journal article" date="2014" name="FEBS J.">
        <title>Genome-wide expressional and functional analysis of calcium transport elements during abiotic stress and development in rice.</title>
        <authorList>
            <person name="Singh A."/>
            <person name="Kanwar P."/>
            <person name="Yadav A.K."/>
            <person name="Mishra M."/>
            <person name="Jha S.K."/>
            <person name="Baranwal V."/>
            <person name="Pandey A."/>
            <person name="Kapoor S."/>
            <person name="Tyagi A.K."/>
            <person name="Pandey G.K."/>
        </authorList>
    </citation>
    <scope>INDUCTION</scope>
</reference>
<sequence length="584" mass="63322">MATRRRSFPLVPLLLFLLAAAAYGRLISDGSPASASATSLLSNPVSAVIRLTTSNSASASSPPAAAPEEKCEQSYGFLPCTTTVLGNLFLVLAYGFLMYKAATFLSAGSELLLEIMGPGLVGGLLLPILGALPDALLVLVSGLSGSRETAQSQVLIGMGLLAGSTVFLLTLLWGTCVVVGKCDIGPNGVAVDLQNNKGFSLTGTGISTDVQTSYAARIMGISVIPFIIAQFPKMLKTHHGQRLAVLLALIVSFSLVLAYCLYQVFQPWIQKRKLAYAKHKHVISGILRHAQMEALGRLLNEDGTPNEDVIKKLFHKIDMDESQTLSRAELHALIIGINFEEVDFDKNDAVDKIMDDFDTSGNDIVEEAEFVSGMKRWLNEAKRSVPTSGAYSNKFITDYHARTRQEHDLLVDRSDETVESVENPGWCITKAVGLLLLGSAIAAAFADPLVDAVHNFSNASHIPSFFISFIALPLATNSSEAVSAIIFASRKKLRTSSLTFSEVYGGVTMNNTLCLGVFLALIYIRNLTWDFSSEVLIILLVCVIMGLFTSFRTTFPLWTCLVAYMLYPLSLVVVYILDFVFGWS</sequence>
<evidence type="ECO:0000250" key="1">
    <source>
        <dbReference type="UniProtKB" id="Q8L636"/>
    </source>
</evidence>
<evidence type="ECO:0000255" key="2"/>
<evidence type="ECO:0000255" key="3">
    <source>
        <dbReference type="PROSITE-ProRule" id="PRU00448"/>
    </source>
</evidence>
<evidence type="ECO:0000269" key="4">
    <source>
    </source>
</evidence>
<evidence type="ECO:0000303" key="5">
    <source>
    </source>
</evidence>
<evidence type="ECO:0000305" key="6"/>
<evidence type="ECO:0000312" key="7">
    <source>
        <dbReference type="EMBL" id="BAD73036.1"/>
    </source>
</evidence>
<evidence type="ECO:0000312" key="8">
    <source>
        <dbReference type="EMBL" id="BAF04292.1"/>
    </source>
</evidence>
<evidence type="ECO:0000312" key="9">
    <source>
        <dbReference type="EMBL" id="EEE54102.1"/>
    </source>
</evidence>
<name>NCL1_ORYSJ</name>